<proteinExistence type="inferred from homology"/>
<keyword id="KW-0131">Cell cycle</keyword>
<keyword id="KW-0132">Cell division</keyword>
<keyword id="KW-0997">Cell inner membrane</keyword>
<keyword id="KW-1003">Cell membrane</keyword>
<keyword id="KW-0133">Cell shape</keyword>
<keyword id="KW-0961">Cell wall biogenesis/degradation</keyword>
<keyword id="KW-0328">Glycosyltransferase</keyword>
<keyword id="KW-0472">Membrane</keyword>
<keyword id="KW-0573">Peptidoglycan synthesis</keyword>
<keyword id="KW-1185">Reference proteome</keyword>
<keyword id="KW-0808">Transferase</keyword>
<protein>
    <recommendedName>
        <fullName evidence="1">UDP-N-acetylglucosamine--N-acetylmuramyl-(pentapeptide) pyrophosphoryl-undecaprenol N-acetylglucosamine transferase</fullName>
        <ecNumber evidence="1">2.4.1.227</ecNumber>
    </recommendedName>
    <alternativeName>
        <fullName evidence="1">Undecaprenyl-PP-MurNAc-pentapeptide-UDPGlcNAc GlcNAc transferase</fullName>
    </alternativeName>
</protein>
<accession>Q8R5N5</accession>
<feature type="chain" id="PRO_0000315096" description="UDP-N-acetylglucosamine--N-acetylmuramyl-(pentapeptide) pyrophosphoryl-undecaprenol N-acetylglucosamine transferase">
    <location>
        <begin position="1"/>
        <end position="357"/>
    </location>
</feature>
<feature type="binding site" evidence="1">
    <location>
        <begin position="14"/>
        <end position="16"/>
    </location>
    <ligand>
        <name>UDP-N-acetyl-alpha-D-glucosamine</name>
        <dbReference type="ChEBI" id="CHEBI:57705"/>
    </ligand>
</feature>
<feature type="binding site" evidence="1">
    <location>
        <position position="120"/>
    </location>
    <ligand>
        <name>UDP-N-acetyl-alpha-D-glucosamine</name>
        <dbReference type="ChEBI" id="CHEBI:57705"/>
    </ligand>
</feature>
<feature type="binding site" evidence="1">
    <location>
        <position position="164"/>
    </location>
    <ligand>
        <name>UDP-N-acetyl-alpha-D-glucosamine</name>
        <dbReference type="ChEBI" id="CHEBI:57705"/>
    </ligand>
</feature>
<feature type="binding site" evidence="1">
    <location>
        <position position="194"/>
    </location>
    <ligand>
        <name>UDP-N-acetyl-alpha-D-glucosamine</name>
        <dbReference type="ChEBI" id="CHEBI:57705"/>
    </ligand>
</feature>
<feature type="binding site" evidence="1">
    <location>
        <position position="291"/>
    </location>
    <ligand>
        <name>UDP-N-acetyl-alpha-D-glucosamine</name>
        <dbReference type="ChEBI" id="CHEBI:57705"/>
    </ligand>
</feature>
<name>MURG_FUSNN</name>
<sequence>MRKMKKVMLTTGGTGGHIYPALAVADRLKIKGIEAVFVGSMERMEKDLVPESGHKFIGVDISVPRGLKNIRKYLKAIRTAYKVIKEEKPDAIIGFGNYISVPVIIAGILLRKKIYLQEQNVNIGSANKMFYKIAKMTFLAFDKTYDDIPIKSQSRFKVTGNPLRKEIDGLKYATEREKLGIKPSEKVLLITGGSLGAQEINNIVMKYWEKFCADKNLRIFWATGNNFEQLKKVRKTKKENDRIEPYFNDMLNVMAAADLVVCRAGALTISEIIELEKPAIIIPYGSIKVGQYENAKVLTNYDAAYVFTRDELDESMKRVFEIIRNDEKLKKMRIRLKPLKKPNAAEEIIASLDIWRN</sequence>
<gene>
    <name evidence="1" type="primary">murG</name>
    <name type="ordered locus">FN1457</name>
</gene>
<reference key="1">
    <citation type="journal article" date="2002" name="J. Bacteriol.">
        <title>Genome sequence and analysis of the oral bacterium Fusobacterium nucleatum strain ATCC 25586.</title>
        <authorList>
            <person name="Kapatral V."/>
            <person name="Anderson I."/>
            <person name="Ivanova N."/>
            <person name="Reznik G."/>
            <person name="Los T."/>
            <person name="Lykidis A."/>
            <person name="Bhattacharyya A."/>
            <person name="Bartman A."/>
            <person name="Gardner W."/>
            <person name="Grechkin G."/>
            <person name="Zhu L."/>
            <person name="Vasieva O."/>
            <person name="Chu L."/>
            <person name="Kogan Y."/>
            <person name="Chaga O."/>
            <person name="Goltsman E."/>
            <person name="Bernal A."/>
            <person name="Larsen N."/>
            <person name="D'Souza M."/>
            <person name="Walunas T."/>
            <person name="Pusch G."/>
            <person name="Haselkorn R."/>
            <person name="Fonstein M."/>
            <person name="Kyrpides N.C."/>
            <person name="Overbeek R."/>
        </authorList>
    </citation>
    <scope>NUCLEOTIDE SEQUENCE [LARGE SCALE GENOMIC DNA]</scope>
    <source>
        <strain>ATCC 25586 / DSM 15643 / BCRC 10681 / CIP 101130 / JCM 8532 / KCTC 2640 / LMG 13131 / VPI 4355</strain>
    </source>
</reference>
<dbReference type="EC" id="2.4.1.227" evidence="1"/>
<dbReference type="EMBL" id="AE009951">
    <property type="protein sequence ID" value="AAL95650.1"/>
    <property type="molecule type" value="Genomic_DNA"/>
</dbReference>
<dbReference type="RefSeq" id="NP_604351.1">
    <property type="nucleotide sequence ID" value="NC_003454.1"/>
</dbReference>
<dbReference type="SMR" id="Q8R5N5"/>
<dbReference type="FunCoup" id="Q8R5N5">
    <property type="interactions" value="264"/>
</dbReference>
<dbReference type="STRING" id="190304.FN1457"/>
<dbReference type="CAZy" id="GT28">
    <property type="family name" value="Glycosyltransferase Family 28"/>
</dbReference>
<dbReference type="PaxDb" id="190304-FN1457"/>
<dbReference type="EnsemblBacteria" id="AAL95650">
    <property type="protein sequence ID" value="AAL95650"/>
    <property type="gene ID" value="FN1457"/>
</dbReference>
<dbReference type="KEGG" id="fnu:FN1457"/>
<dbReference type="PATRIC" id="fig|190304.8.peg.2017"/>
<dbReference type="eggNOG" id="COG0707">
    <property type="taxonomic scope" value="Bacteria"/>
</dbReference>
<dbReference type="HOGENOM" id="CLU_037404_0_1_0"/>
<dbReference type="InParanoid" id="Q8R5N5"/>
<dbReference type="BioCyc" id="FNUC190304:G1FZS-2026-MONOMER"/>
<dbReference type="UniPathway" id="UPA00219"/>
<dbReference type="Proteomes" id="UP000002521">
    <property type="component" value="Chromosome"/>
</dbReference>
<dbReference type="GO" id="GO:0005886">
    <property type="term" value="C:plasma membrane"/>
    <property type="evidence" value="ECO:0007669"/>
    <property type="project" value="UniProtKB-SubCell"/>
</dbReference>
<dbReference type="GO" id="GO:0016757">
    <property type="term" value="F:glycosyltransferase activity"/>
    <property type="evidence" value="ECO:0000318"/>
    <property type="project" value="GO_Central"/>
</dbReference>
<dbReference type="GO" id="GO:0051991">
    <property type="term" value="F:UDP-N-acetyl-D-glucosamine:N-acetylmuramoyl-L-alanyl-D-glutamyl-meso-2,6-diaminopimelyl-D-alanyl-D-alanine-diphosphoundecaprenol 4-beta-N-acetylglucosaminlytransferase activity"/>
    <property type="evidence" value="ECO:0007669"/>
    <property type="project" value="RHEA"/>
</dbReference>
<dbReference type="GO" id="GO:0050511">
    <property type="term" value="F:undecaprenyldiphospho-muramoylpentapeptide beta-N-acetylglucosaminyltransferase activity"/>
    <property type="evidence" value="ECO:0007669"/>
    <property type="project" value="UniProtKB-UniRule"/>
</dbReference>
<dbReference type="GO" id="GO:0005975">
    <property type="term" value="P:carbohydrate metabolic process"/>
    <property type="evidence" value="ECO:0007669"/>
    <property type="project" value="InterPro"/>
</dbReference>
<dbReference type="GO" id="GO:0051301">
    <property type="term" value="P:cell division"/>
    <property type="evidence" value="ECO:0007669"/>
    <property type="project" value="UniProtKB-KW"/>
</dbReference>
<dbReference type="GO" id="GO:0071555">
    <property type="term" value="P:cell wall organization"/>
    <property type="evidence" value="ECO:0007669"/>
    <property type="project" value="UniProtKB-KW"/>
</dbReference>
<dbReference type="GO" id="GO:0030259">
    <property type="term" value="P:lipid glycosylation"/>
    <property type="evidence" value="ECO:0007669"/>
    <property type="project" value="UniProtKB-UniRule"/>
</dbReference>
<dbReference type="GO" id="GO:0009252">
    <property type="term" value="P:peptidoglycan biosynthetic process"/>
    <property type="evidence" value="ECO:0007669"/>
    <property type="project" value="UniProtKB-UniRule"/>
</dbReference>
<dbReference type="GO" id="GO:0008360">
    <property type="term" value="P:regulation of cell shape"/>
    <property type="evidence" value="ECO:0007669"/>
    <property type="project" value="UniProtKB-KW"/>
</dbReference>
<dbReference type="CDD" id="cd03785">
    <property type="entry name" value="GT28_MurG"/>
    <property type="match status" value="1"/>
</dbReference>
<dbReference type="Gene3D" id="3.40.50.2000">
    <property type="entry name" value="Glycogen Phosphorylase B"/>
    <property type="match status" value="2"/>
</dbReference>
<dbReference type="HAMAP" id="MF_00033">
    <property type="entry name" value="MurG"/>
    <property type="match status" value="1"/>
</dbReference>
<dbReference type="InterPro" id="IPR006009">
    <property type="entry name" value="GlcNAc_MurG"/>
</dbReference>
<dbReference type="InterPro" id="IPR007235">
    <property type="entry name" value="Glyco_trans_28_C"/>
</dbReference>
<dbReference type="InterPro" id="IPR004276">
    <property type="entry name" value="GlycoTrans_28_N"/>
</dbReference>
<dbReference type="NCBIfam" id="TIGR01133">
    <property type="entry name" value="murG"/>
    <property type="match status" value="1"/>
</dbReference>
<dbReference type="PANTHER" id="PTHR21015:SF22">
    <property type="entry name" value="GLYCOSYLTRANSFERASE"/>
    <property type="match status" value="1"/>
</dbReference>
<dbReference type="PANTHER" id="PTHR21015">
    <property type="entry name" value="UDP-N-ACETYLGLUCOSAMINE--N-ACETYLMURAMYL-(PENTAPEPTIDE) PYROPHOSPHORYL-UNDECAPRENOL N-ACETYLGLUCOSAMINE TRANSFERASE 1"/>
    <property type="match status" value="1"/>
</dbReference>
<dbReference type="Pfam" id="PF04101">
    <property type="entry name" value="Glyco_tran_28_C"/>
    <property type="match status" value="1"/>
</dbReference>
<dbReference type="Pfam" id="PF03033">
    <property type="entry name" value="Glyco_transf_28"/>
    <property type="match status" value="1"/>
</dbReference>
<dbReference type="SUPFAM" id="SSF53756">
    <property type="entry name" value="UDP-Glycosyltransferase/glycogen phosphorylase"/>
    <property type="match status" value="1"/>
</dbReference>
<evidence type="ECO:0000255" key="1">
    <source>
        <dbReference type="HAMAP-Rule" id="MF_00033"/>
    </source>
</evidence>
<organism>
    <name type="scientific">Fusobacterium nucleatum subsp. nucleatum (strain ATCC 25586 / DSM 15643 / BCRC 10681 / CIP 101130 / JCM 8532 / KCTC 2640 / LMG 13131 / VPI 4355)</name>
    <dbReference type="NCBI Taxonomy" id="190304"/>
    <lineage>
        <taxon>Bacteria</taxon>
        <taxon>Fusobacteriati</taxon>
        <taxon>Fusobacteriota</taxon>
        <taxon>Fusobacteriia</taxon>
        <taxon>Fusobacteriales</taxon>
        <taxon>Fusobacteriaceae</taxon>
        <taxon>Fusobacterium</taxon>
    </lineage>
</organism>
<comment type="function">
    <text evidence="1">Cell wall formation. Catalyzes the transfer of a GlcNAc subunit on undecaprenyl-pyrophosphoryl-MurNAc-pentapeptide (lipid intermediate I) to form undecaprenyl-pyrophosphoryl-MurNAc-(pentapeptide)GlcNAc (lipid intermediate II).</text>
</comment>
<comment type="catalytic activity">
    <reaction evidence="1">
        <text>di-trans,octa-cis-undecaprenyl diphospho-N-acetyl-alpha-D-muramoyl-L-alanyl-D-glutamyl-meso-2,6-diaminopimeloyl-D-alanyl-D-alanine + UDP-N-acetyl-alpha-D-glucosamine = di-trans,octa-cis-undecaprenyl diphospho-[N-acetyl-alpha-D-glucosaminyl-(1-&gt;4)]-N-acetyl-alpha-D-muramoyl-L-alanyl-D-glutamyl-meso-2,6-diaminopimeloyl-D-alanyl-D-alanine + UDP + H(+)</text>
        <dbReference type="Rhea" id="RHEA:31227"/>
        <dbReference type="ChEBI" id="CHEBI:15378"/>
        <dbReference type="ChEBI" id="CHEBI:57705"/>
        <dbReference type="ChEBI" id="CHEBI:58223"/>
        <dbReference type="ChEBI" id="CHEBI:61387"/>
        <dbReference type="ChEBI" id="CHEBI:61388"/>
        <dbReference type="EC" id="2.4.1.227"/>
    </reaction>
</comment>
<comment type="pathway">
    <text evidence="1">Cell wall biogenesis; peptidoglycan biosynthesis.</text>
</comment>
<comment type="subcellular location">
    <subcellularLocation>
        <location evidence="1">Cell inner membrane</location>
        <topology evidence="1">Peripheral membrane protein</topology>
        <orientation evidence="1">Cytoplasmic side</orientation>
    </subcellularLocation>
</comment>
<comment type="similarity">
    <text evidence="1">Belongs to the glycosyltransferase 28 family. MurG subfamily.</text>
</comment>